<proteinExistence type="inferred from homology"/>
<comment type="function">
    <text evidence="1">Catalyzes the initial step of the lipid cycle reactions in the biosynthesis of the cell wall peptidoglycan: transfers peptidoglycan precursor phospho-MurNAc-pentapeptide from UDP-MurNAc-pentapeptide onto the lipid carrier undecaprenyl phosphate, yielding undecaprenyl-pyrophosphoryl-MurNAc-pentapeptide, known as lipid I.</text>
</comment>
<comment type="catalytic activity">
    <reaction evidence="1">
        <text>UDP-N-acetyl-alpha-D-muramoyl-L-alanyl-gamma-D-glutamyl-meso-2,6-diaminopimeloyl-D-alanyl-D-alanine + di-trans,octa-cis-undecaprenyl phosphate = di-trans,octa-cis-undecaprenyl diphospho-N-acetyl-alpha-D-muramoyl-L-alanyl-D-glutamyl-meso-2,6-diaminopimeloyl-D-alanyl-D-alanine + UMP</text>
        <dbReference type="Rhea" id="RHEA:28386"/>
        <dbReference type="ChEBI" id="CHEBI:57865"/>
        <dbReference type="ChEBI" id="CHEBI:60392"/>
        <dbReference type="ChEBI" id="CHEBI:61386"/>
        <dbReference type="ChEBI" id="CHEBI:61387"/>
        <dbReference type="EC" id="2.7.8.13"/>
    </reaction>
</comment>
<comment type="cofactor">
    <cofactor evidence="1">
        <name>Mg(2+)</name>
        <dbReference type="ChEBI" id="CHEBI:18420"/>
    </cofactor>
</comment>
<comment type="pathway">
    <text evidence="1">Cell wall biogenesis; peptidoglycan biosynthesis.</text>
</comment>
<comment type="subcellular location">
    <subcellularLocation>
        <location evidence="1">Cell inner membrane</location>
        <topology evidence="1">Multi-pass membrane protein</topology>
    </subcellularLocation>
</comment>
<comment type="similarity">
    <text evidence="1">Belongs to the glycosyltransferase 4 family. MraY subfamily.</text>
</comment>
<dbReference type="EC" id="2.7.8.13" evidence="1"/>
<dbReference type="EMBL" id="CP000304">
    <property type="protein sequence ID" value="ABP78776.1"/>
    <property type="molecule type" value="Genomic_DNA"/>
</dbReference>
<dbReference type="RefSeq" id="WP_011912266.1">
    <property type="nucleotide sequence ID" value="NC_009434.1"/>
</dbReference>
<dbReference type="SMR" id="A4VIH5"/>
<dbReference type="GeneID" id="66820232"/>
<dbReference type="KEGG" id="psa:PST_1079"/>
<dbReference type="eggNOG" id="COG0472">
    <property type="taxonomic scope" value="Bacteria"/>
</dbReference>
<dbReference type="HOGENOM" id="CLU_023982_0_0_6"/>
<dbReference type="UniPathway" id="UPA00219"/>
<dbReference type="Proteomes" id="UP000000233">
    <property type="component" value="Chromosome"/>
</dbReference>
<dbReference type="GO" id="GO:0005886">
    <property type="term" value="C:plasma membrane"/>
    <property type="evidence" value="ECO:0007669"/>
    <property type="project" value="UniProtKB-SubCell"/>
</dbReference>
<dbReference type="GO" id="GO:0046872">
    <property type="term" value="F:metal ion binding"/>
    <property type="evidence" value="ECO:0007669"/>
    <property type="project" value="UniProtKB-KW"/>
</dbReference>
<dbReference type="GO" id="GO:0008963">
    <property type="term" value="F:phospho-N-acetylmuramoyl-pentapeptide-transferase activity"/>
    <property type="evidence" value="ECO:0007669"/>
    <property type="project" value="UniProtKB-UniRule"/>
</dbReference>
<dbReference type="GO" id="GO:0051992">
    <property type="term" value="F:UDP-N-acetylmuramoyl-L-alanyl-D-glutamyl-meso-2,6-diaminopimelyl-D-alanyl-D-alanine:undecaprenyl-phosphate transferase activity"/>
    <property type="evidence" value="ECO:0007669"/>
    <property type="project" value="RHEA"/>
</dbReference>
<dbReference type="GO" id="GO:0051301">
    <property type="term" value="P:cell division"/>
    <property type="evidence" value="ECO:0007669"/>
    <property type="project" value="UniProtKB-KW"/>
</dbReference>
<dbReference type="GO" id="GO:0071555">
    <property type="term" value="P:cell wall organization"/>
    <property type="evidence" value="ECO:0007669"/>
    <property type="project" value="UniProtKB-KW"/>
</dbReference>
<dbReference type="GO" id="GO:0009252">
    <property type="term" value="P:peptidoglycan biosynthetic process"/>
    <property type="evidence" value="ECO:0007669"/>
    <property type="project" value="UniProtKB-UniRule"/>
</dbReference>
<dbReference type="GO" id="GO:0008360">
    <property type="term" value="P:regulation of cell shape"/>
    <property type="evidence" value="ECO:0007669"/>
    <property type="project" value="UniProtKB-KW"/>
</dbReference>
<dbReference type="CDD" id="cd06852">
    <property type="entry name" value="GT_MraY"/>
    <property type="match status" value="1"/>
</dbReference>
<dbReference type="HAMAP" id="MF_00038">
    <property type="entry name" value="MraY"/>
    <property type="match status" value="1"/>
</dbReference>
<dbReference type="InterPro" id="IPR000715">
    <property type="entry name" value="Glycosyl_transferase_4"/>
</dbReference>
<dbReference type="InterPro" id="IPR003524">
    <property type="entry name" value="PNAcMuramoyl-5peptid_Trfase"/>
</dbReference>
<dbReference type="InterPro" id="IPR018480">
    <property type="entry name" value="PNAcMuramoyl-5peptid_Trfase_CS"/>
</dbReference>
<dbReference type="NCBIfam" id="TIGR00445">
    <property type="entry name" value="mraY"/>
    <property type="match status" value="1"/>
</dbReference>
<dbReference type="PANTHER" id="PTHR22926">
    <property type="entry name" value="PHOSPHO-N-ACETYLMURAMOYL-PENTAPEPTIDE-TRANSFERASE"/>
    <property type="match status" value="1"/>
</dbReference>
<dbReference type="PANTHER" id="PTHR22926:SF5">
    <property type="entry name" value="PHOSPHO-N-ACETYLMURAMOYL-PENTAPEPTIDE-TRANSFERASE HOMOLOG"/>
    <property type="match status" value="1"/>
</dbReference>
<dbReference type="Pfam" id="PF00953">
    <property type="entry name" value="Glycos_transf_4"/>
    <property type="match status" value="1"/>
</dbReference>
<dbReference type="Pfam" id="PF10555">
    <property type="entry name" value="MraY_sig1"/>
    <property type="match status" value="1"/>
</dbReference>
<dbReference type="PROSITE" id="PS01347">
    <property type="entry name" value="MRAY_1"/>
    <property type="match status" value="1"/>
</dbReference>
<dbReference type="PROSITE" id="PS01348">
    <property type="entry name" value="MRAY_2"/>
    <property type="match status" value="1"/>
</dbReference>
<evidence type="ECO:0000255" key="1">
    <source>
        <dbReference type="HAMAP-Rule" id="MF_00038"/>
    </source>
</evidence>
<name>MRAY_STUS1</name>
<organism>
    <name type="scientific">Stutzerimonas stutzeri (strain A1501)</name>
    <name type="common">Pseudomonas stutzeri</name>
    <dbReference type="NCBI Taxonomy" id="379731"/>
    <lineage>
        <taxon>Bacteria</taxon>
        <taxon>Pseudomonadati</taxon>
        <taxon>Pseudomonadota</taxon>
        <taxon>Gammaproteobacteria</taxon>
        <taxon>Pseudomonadales</taxon>
        <taxon>Pseudomonadaceae</taxon>
        <taxon>Stutzerimonas</taxon>
    </lineage>
</organism>
<feature type="chain" id="PRO_1000003032" description="Phospho-N-acetylmuramoyl-pentapeptide-transferase">
    <location>
        <begin position="1"/>
        <end position="360"/>
    </location>
</feature>
<feature type="transmembrane region" description="Helical" evidence="1">
    <location>
        <begin position="25"/>
        <end position="45"/>
    </location>
</feature>
<feature type="transmembrane region" description="Helical" evidence="1">
    <location>
        <begin position="74"/>
        <end position="94"/>
    </location>
</feature>
<feature type="transmembrane region" description="Helical" evidence="1">
    <location>
        <begin position="97"/>
        <end position="117"/>
    </location>
</feature>
<feature type="transmembrane region" description="Helical" evidence="1">
    <location>
        <begin position="132"/>
        <end position="152"/>
    </location>
</feature>
<feature type="transmembrane region" description="Helical" evidence="1">
    <location>
        <begin position="168"/>
        <end position="188"/>
    </location>
</feature>
<feature type="transmembrane region" description="Helical" evidence="1">
    <location>
        <begin position="199"/>
        <end position="219"/>
    </location>
</feature>
<feature type="transmembrane region" description="Helical" evidence="1">
    <location>
        <begin position="236"/>
        <end position="256"/>
    </location>
</feature>
<feature type="transmembrane region" description="Helical" evidence="1">
    <location>
        <begin position="263"/>
        <end position="283"/>
    </location>
</feature>
<feature type="transmembrane region" description="Helical" evidence="1">
    <location>
        <begin position="288"/>
        <end position="308"/>
    </location>
</feature>
<feature type="transmembrane region" description="Helical" evidence="1">
    <location>
        <begin position="338"/>
        <end position="358"/>
    </location>
</feature>
<sequence length="360" mass="39393">MLLLLAEYLQQFHKGFAVFQYLSLRGILGVLTALVLSLWMGPWLIRTLQLRQIGQAVRTDGPQSHLSKSGTPTMGGALILSAIGISTLLWADLANRYVWVVLAVTLLFGAIGWVDDYRKVIEKNSRGLPSRWKYFWQSVFGLGAAIFLYMTAQTPVETTLILPLLKNIEIPLGIGFVILTYFVIVGSSNAVNLTDGLDGLAIMPTVMVGGGLGIFCYLSGNVNFAEYLLIPYIPGSGELIVFCGALIGAGLGFLWFNTYPAQVFMGDVGALALGAALGTIAVIVRQEVVLFIMGGVFVMETLSVMIQVASFKLTGKRVFRMAPIHHHFELKGWPEPRVIVRFWIITVILVLVGLATLKLR</sequence>
<gene>
    <name evidence="1" type="primary">mraY</name>
    <name type="ordered locus">PST_1079</name>
</gene>
<reference key="1">
    <citation type="journal article" date="2008" name="Proc. Natl. Acad. Sci. U.S.A.">
        <title>Nitrogen fixation island and rhizosphere competence traits in the genome of root-associated Pseudomonas stutzeri A1501.</title>
        <authorList>
            <person name="Yan Y."/>
            <person name="Yang J."/>
            <person name="Dou Y."/>
            <person name="Chen M."/>
            <person name="Ping S."/>
            <person name="Peng J."/>
            <person name="Lu W."/>
            <person name="Zhang W."/>
            <person name="Yao Z."/>
            <person name="Li H."/>
            <person name="Liu W."/>
            <person name="He S."/>
            <person name="Geng L."/>
            <person name="Zhang X."/>
            <person name="Yang F."/>
            <person name="Yu H."/>
            <person name="Zhan Y."/>
            <person name="Li D."/>
            <person name="Lin Z."/>
            <person name="Wang Y."/>
            <person name="Elmerich C."/>
            <person name="Lin M."/>
            <person name="Jin Q."/>
        </authorList>
    </citation>
    <scope>NUCLEOTIDE SEQUENCE [LARGE SCALE GENOMIC DNA]</scope>
    <source>
        <strain>A1501</strain>
    </source>
</reference>
<protein>
    <recommendedName>
        <fullName evidence="1">Phospho-N-acetylmuramoyl-pentapeptide-transferase</fullName>
        <ecNumber evidence="1">2.7.8.13</ecNumber>
    </recommendedName>
    <alternativeName>
        <fullName evidence="1">UDP-MurNAc-pentapeptide phosphotransferase</fullName>
    </alternativeName>
</protein>
<keyword id="KW-0131">Cell cycle</keyword>
<keyword id="KW-0132">Cell division</keyword>
<keyword id="KW-0997">Cell inner membrane</keyword>
<keyword id="KW-1003">Cell membrane</keyword>
<keyword id="KW-0133">Cell shape</keyword>
<keyword id="KW-0961">Cell wall biogenesis/degradation</keyword>
<keyword id="KW-0460">Magnesium</keyword>
<keyword id="KW-0472">Membrane</keyword>
<keyword id="KW-0479">Metal-binding</keyword>
<keyword id="KW-0573">Peptidoglycan synthesis</keyword>
<keyword id="KW-1185">Reference proteome</keyword>
<keyword id="KW-0808">Transferase</keyword>
<keyword id="KW-0812">Transmembrane</keyword>
<keyword id="KW-1133">Transmembrane helix</keyword>
<accession>A4VIH5</accession>